<proteinExistence type="inferred from homology"/>
<feature type="chain" id="PRO_0000131517" description="Small ribosomal subunit protein uS5">
    <location>
        <begin position="1"/>
        <end position="164"/>
    </location>
</feature>
<feature type="domain" description="S5 DRBM" evidence="1">
    <location>
        <begin position="9"/>
        <end position="72"/>
    </location>
</feature>
<accession>Q8RIH3</accession>
<sequence length="164" mass="17475">MLNREDNQYQEKLLKISRVSKTTKGGRTISFSVLAAVGDGEGKIGLGLGKANGVPDAIRKAIAAAKKNIVKISLKNNTIPHEIAGKWGATTLWMAPAYEGTGVIAGSASREILELVGVHDILTKIKGSRNKHNVARATVEALKLLRTAEQIAALRGLEVKDILS</sequence>
<reference key="1">
    <citation type="journal article" date="2002" name="J. Bacteriol.">
        <title>Genome sequence and analysis of the oral bacterium Fusobacterium nucleatum strain ATCC 25586.</title>
        <authorList>
            <person name="Kapatral V."/>
            <person name="Anderson I."/>
            <person name="Ivanova N."/>
            <person name="Reznik G."/>
            <person name="Los T."/>
            <person name="Lykidis A."/>
            <person name="Bhattacharyya A."/>
            <person name="Bartman A."/>
            <person name="Gardner W."/>
            <person name="Grechkin G."/>
            <person name="Zhu L."/>
            <person name="Vasieva O."/>
            <person name="Chu L."/>
            <person name="Kogan Y."/>
            <person name="Chaga O."/>
            <person name="Goltsman E."/>
            <person name="Bernal A."/>
            <person name="Larsen N."/>
            <person name="D'Souza M."/>
            <person name="Walunas T."/>
            <person name="Pusch G."/>
            <person name="Haselkorn R."/>
            <person name="Fonstein M."/>
            <person name="Kyrpides N.C."/>
            <person name="Overbeek R."/>
        </authorList>
    </citation>
    <scope>NUCLEOTIDE SEQUENCE [LARGE SCALE GENOMIC DNA]</scope>
    <source>
        <strain>ATCC 25586 / DSM 15643 / BCRC 10681 / CIP 101130 / JCM 8532 / KCTC 2640 / LMG 13131 / VPI 4355</strain>
    </source>
</reference>
<dbReference type="EMBL" id="AE009951">
    <property type="protein sequence ID" value="AAL93742.1"/>
    <property type="molecule type" value="Genomic_DNA"/>
</dbReference>
<dbReference type="RefSeq" id="NP_602443.1">
    <property type="nucleotide sequence ID" value="NC_003454.1"/>
</dbReference>
<dbReference type="RefSeq" id="WP_011015714.1">
    <property type="nucleotide sequence ID" value="NZ_OZ209243.1"/>
</dbReference>
<dbReference type="SMR" id="Q8RIH3"/>
<dbReference type="FunCoup" id="Q8RIH3">
    <property type="interactions" value="407"/>
</dbReference>
<dbReference type="STRING" id="190304.FN1627"/>
<dbReference type="PaxDb" id="190304-FN1627"/>
<dbReference type="EnsemblBacteria" id="AAL93742">
    <property type="protein sequence ID" value="AAL93742"/>
    <property type="gene ID" value="FN1627"/>
</dbReference>
<dbReference type="GeneID" id="79782566"/>
<dbReference type="KEGG" id="fnu:FN1627"/>
<dbReference type="PATRIC" id="fig|190304.8.peg.120"/>
<dbReference type="eggNOG" id="COG0098">
    <property type="taxonomic scope" value="Bacteria"/>
</dbReference>
<dbReference type="HOGENOM" id="CLU_065898_2_2_0"/>
<dbReference type="InParanoid" id="Q8RIH3"/>
<dbReference type="BioCyc" id="FNUC190304:G1FZS-130-MONOMER"/>
<dbReference type="Proteomes" id="UP000002521">
    <property type="component" value="Chromosome"/>
</dbReference>
<dbReference type="GO" id="GO:0022627">
    <property type="term" value="C:cytosolic small ribosomal subunit"/>
    <property type="evidence" value="ECO:0000318"/>
    <property type="project" value="GO_Central"/>
</dbReference>
<dbReference type="GO" id="GO:0019843">
    <property type="term" value="F:rRNA binding"/>
    <property type="evidence" value="ECO:0007669"/>
    <property type="project" value="UniProtKB-UniRule"/>
</dbReference>
<dbReference type="GO" id="GO:0003735">
    <property type="term" value="F:structural constituent of ribosome"/>
    <property type="evidence" value="ECO:0000318"/>
    <property type="project" value="GO_Central"/>
</dbReference>
<dbReference type="GO" id="GO:0006412">
    <property type="term" value="P:translation"/>
    <property type="evidence" value="ECO:0000318"/>
    <property type="project" value="GO_Central"/>
</dbReference>
<dbReference type="FunFam" id="3.30.160.20:FF:000001">
    <property type="entry name" value="30S ribosomal protein S5"/>
    <property type="match status" value="1"/>
</dbReference>
<dbReference type="FunFam" id="3.30.230.10:FF:000002">
    <property type="entry name" value="30S ribosomal protein S5"/>
    <property type="match status" value="1"/>
</dbReference>
<dbReference type="Gene3D" id="3.30.160.20">
    <property type="match status" value="1"/>
</dbReference>
<dbReference type="Gene3D" id="3.30.230.10">
    <property type="match status" value="1"/>
</dbReference>
<dbReference type="HAMAP" id="MF_01307_B">
    <property type="entry name" value="Ribosomal_uS5_B"/>
    <property type="match status" value="1"/>
</dbReference>
<dbReference type="InterPro" id="IPR020568">
    <property type="entry name" value="Ribosomal_Su5_D2-typ_SF"/>
</dbReference>
<dbReference type="InterPro" id="IPR000851">
    <property type="entry name" value="Ribosomal_uS5"/>
</dbReference>
<dbReference type="InterPro" id="IPR005712">
    <property type="entry name" value="Ribosomal_uS5_bac-type"/>
</dbReference>
<dbReference type="InterPro" id="IPR005324">
    <property type="entry name" value="Ribosomal_uS5_C"/>
</dbReference>
<dbReference type="InterPro" id="IPR013810">
    <property type="entry name" value="Ribosomal_uS5_N"/>
</dbReference>
<dbReference type="InterPro" id="IPR018192">
    <property type="entry name" value="Ribosomal_uS5_N_CS"/>
</dbReference>
<dbReference type="InterPro" id="IPR014721">
    <property type="entry name" value="Ribsml_uS5_D2-typ_fold_subgr"/>
</dbReference>
<dbReference type="NCBIfam" id="TIGR01021">
    <property type="entry name" value="rpsE_bact"/>
    <property type="match status" value="1"/>
</dbReference>
<dbReference type="PANTHER" id="PTHR48277">
    <property type="entry name" value="MITOCHONDRIAL RIBOSOMAL PROTEIN S5"/>
    <property type="match status" value="1"/>
</dbReference>
<dbReference type="PANTHER" id="PTHR48277:SF1">
    <property type="entry name" value="MITOCHONDRIAL RIBOSOMAL PROTEIN S5"/>
    <property type="match status" value="1"/>
</dbReference>
<dbReference type="Pfam" id="PF00333">
    <property type="entry name" value="Ribosomal_S5"/>
    <property type="match status" value="1"/>
</dbReference>
<dbReference type="Pfam" id="PF03719">
    <property type="entry name" value="Ribosomal_S5_C"/>
    <property type="match status" value="1"/>
</dbReference>
<dbReference type="SUPFAM" id="SSF54768">
    <property type="entry name" value="dsRNA-binding domain-like"/>
    <property type="match status" value="1"/>
</dbReference>
<dbReference type="SUPFAM" id="SSF54211">
    <property type="entry name" value="Ribosomal protein S5 domain 2-like"/>
    <property type="match status" value="1"/>
</dbReference>
<dbReference type="PROSITE" id="PS00585">
    <property type="entry name" value="RIBOSOMAL_S5"/>
    <property type="match status" value="1"/>
</dbReference>
<dbReference type="PROSITE" id="PS50881">
    <property type="entry name" value="S5_DSRBD"/>
    <property type="match status" value="1"/>
</dbReference>
<keyword id="KW-1185">Reference proteome</keyword>
<keyword id="KW-0687">Ribonucleoprotein</keyword>
<keyword id="KW-0689">Ribosomal protein</keyword>
<keyword id="KW-0694">RNA-binding</keyword>
<keyword id="KW-0699">rRNA-binding</keyword>
<comment type="function">
    <text evidence="1">With S4 and S12 plays an important role in translational accuracy.</text>
</comment>
<comment type="function">
    <text evidence="1">Located at the back of the 30S subunit body where it stabilizes the conformation of the head with respect to the body.</text>
</comment>
<comment type="subunit">
    <text evidence="1">Part of the 30S ribosomal subunit. Contacts proteins S4 and S8.</text>
</comment>
<comment type="domain">
    <text>The N-terminal domain interacts with the head of the 30S subunit; the C-terminal domain interacts with the body and contacts protein S4. The interaction surface between S4 and S5 is involved in control of translational fidelity.</text>
</comment>
<comment type="similarity">
    <text evidence="1">Belongs to the universal ribosomal protein uS5 family.</text>
</comment>
<evidence type="ECO:0000255" key="1">
    <source>
        <dbReference type="HAMAP-Rule" id="MF_01307"/>
    </source>
</evidence>
<evidence type="ECO:0000305" key="2"/>
<name>RS5_FUSNN</name>
<organism>
    <name type="scientific">Fusobacterium nucleatum subsp. nucleatum (strain ATCC 25586 / DSM 15643 / BCRC 10681 / CIP 101130 / JCM 8532 / KCTC 2640 / LMG 13131 / VPI 4355)</name>
    <dbReference type="NCBI Taxonomy" id="190304"/>
    <lineage>
        <taxon>Bacteria</taxon>
        <taxon>Fusobacteriati</taxon>
        <taxon>Fusobacteriota</taxon>
        <taxon>Fusobacteriia</taxon>
        <taxon>Fusobacteriales</taxon>
        <taxon>Fusobacteriaceae</taxon>
        <taxon>Fusobacterium</taxon>
    </lineage>
</organism>
<protein>
    <recommendedName>
        <fullName evidence="1">Small ribosomal subunit protein uS5</fullName>
    </recommendedName>
    <alternativeName>
        <fullName evidence="2">30S ribosomal protein S5</fullName>
    </alternativeName>
</protein>
<gene>
    <name evidence="1" type="primary">rpsE</name>
    <name type="ordered locus">FN1627</name>
</gene>